<evidence type="ECO:0000250" key="1"/>
<evidence type="ECO:0000255" key="2"/>
<evidence type="ECO:0000305" key="3"/>
<proteinExistence type="inferred from homology"/>
<comment type="function">
    <text evidence="1">Subunits I and II form the functional core of the enzyme complex. Electrons originating in cytochrome c are transferred via heme a and Cu(A) to the binuclear center formed by heme a3 and Cu(B) (By similarity).</text>
</comment>
<comment type="catalytic activity">
    <reaction>
        <text>4 Fe(II)-[cytochrome c] + O2 + 8 H(+)(in) = 4 Fe(III)-[cytochrome c] + 2 H2O + 4 H(+)(out)</text>
        <dbReference type="Rhea" id="RHEA:11436"/>
        <dbReference type="Rhea" id="RHEA-COMP:10350"/>
        <dbReference type="Rhea" id="RHEA-COMP:14399"/>
        <dbReference type="ChEBI" id="CHEBI:15377"/>
        <dbReference type="ChEBI" id="CHEBI:15378"/>
        <dbReference type="ChEBI" id="CHEBI:15379"/>
        <dbReference type="ChEBI" id="CHEBI:29033"/>
        <dbReference type="ChEBI" id="CHEBI:29034"/>
        <dbReference type="EC" id="7.1.1.9"/>
    </reaction>
</comment>
<comment type="cofactor">
    <cofactor evidence="1">
        <name>Cu cation</name>
        <dbReference type="ChEBI" id="CHEBI:23378"/>
    </cofactor>
    <text evidence="1">Binds a copper A center.</text>
</comment>
<comment type="cofactor">
    <cofactor evidence="1">
        <name>heme</name>
        <dbReference type="ChEBI" id="CHEBI:30413"/>
    </cofactor>
</comment>
<comment type="subcellular location">
    <subcellularLocation>
        <location evidence="3">Cell membrane</location>
        <topology evidence="3">Multi-pass membrane protein</topology>
    </subcellularLocation>
</comment>
<comment type="similarity">
    <text evidence="3">Belongs to the cytochrome c oxidase subunit 2 family.</text>
</comment>
<organism>
    <name type="scientific">Mycobacterium leprae (strain TN)</name>
    <dbReference type="NCBI Taxonomy" id="272631"/>
    <lineage>
        <taxon>Bacteria</taxon>
        <taxon>Bacillati</taxon>
        <taxon>Actinomycetota</taxon>
        <taxon>Actinomycetes</taxon>
        <taxon>Mycobacteriales</taxon>
        <taxon>Mycobacteriaceae</taxon>
        <taxon>Mycobacterium</taxon>
    </lineage>
</organism>
<reference key="1">
    <citation type="journal article" date="2001" name="Nature">
        <title>Massive gene decay in the leprosy bacillus.</title>
        <authorList>
            <person name="Cole S.T."/>
            <person name="Eiglmeier K."/>
            <person name="Parkhill J."/>
            <person name="James K.D."/>
            <person name="Thomson N.R."/>
            <person name="Wheeler P.R."/>
            <person name="Honore N."/>
            <person name="Garnier T."/>
            <person name="Churcher C.M."/>
            <person name="Harris D.E."/>
            <person name="Mungall K.L."/>
            <person name="Basham D."/>
            <person name="Brown D."/>
            <person name="Chillingworth T."/>
            <person name="Connor R."/>
            <person name="Davies R.M."/>
            <person name="Devlin K."/>
            <person name="Duthoy S."/>
            <person name="Feltwell T."/>
            <person name="Fraser A."/>
            <person name="Hamlin N."/>
            <person name="Holroyd S."/>
            <person name="Hornsby T."/>
            <person name="Jagels K."/>
            <person name="Lacroix C."/>
            <person name="Maclean J."/>
            <person name="Moule S."/>
            <person name="Murphy L.D."/>
            <person name="Oliver K."/>
            <person name="Quail M.A."/>
            <person name="Rajandream M.A."/>
            <person name="Rutherford K.M."/>
            <person name="Rutter S."/>
            <person name="Seeger K."/>
            <person name="Simon S."/>
            <person name="Simmonds M."/>
            <person name="Skelton J."/>
            <person name="Squares R."/>
            <person name="Squares S."/>
            <person name="Stevens K."/>
            <person name="Taylor K."/>
            <person name="Whitehead S."/>
            <person name="Woodward J.R."/>
            <person name="Barrell B.G."/>
        </authorList>
    </citation>
    <scope>NUCLEOTIDE SEQUENCE [LARGE SCALE GENOMIC DNA]</scope>
    <source>
        <strain>TN</strain>
    </source>
</reference>
<accession>Q9CCF1</accession>
<name>COX2_MYCLE</name>
<gene>
    <name type="primary">ctaC</name>
    <name type="ordered locus">ML0875</name>
</gene>
<dbReference type="EC" id="7.1.1.9"/>
<dbReference type="EMBL" id="AL583920">
    <property type="protein sequence ID" value="CAC31256.1"/>
    <property type="molecule type" value="Genomic_DNA"/>
</dbReference>
<dbReference type="PIR" id="E87018">
    <property type="entry name" value="E87018"/>
</dbReference>
<dbReference type="RefSeq" id="NP_301661.1">
    <property type="nucleotide sequence ID" value="NC_002677.1"/>
</dbReference>
<dbReference type="SMR" id="Q9CCF1"/>
<dbReference type="STRING" id="272631.gene:17574701"/>
<dbReference type="KEGG" id="mle:ML0875"/>
<dbReference type="PATRIC" id="fig|272631.5.peg.1605"/>
<dbReference type="Leproma" id="ML0875"/>
<dbReference type="eggNOG" id="COG1622">
    <property type="taxonomic scope" value="Bacteria"/>
</dbReference>
<dbReference type="HOGENOM" id="CLU_036876_3_1_11"/>
<dbReference type="OrthoDB" id="9781261at2"/>
<dbReference type="Proteomes" id="UP000000806">
    <property type="component" value="Chromosome"/>
</dbReference>
<dbReference type="GO" id="GO:0005886">
    <property type="term" value="C:plasma membrane"/>
    <property type="evidence" value="ECO:0007669"/>
    <property type="project" value="UniProtKB-SubCell"/>
</dbReference>
<dbReference type="GO" id="GO:0005507">
    <property type="term" value="F:copper ion binding"/>
    <property type="evidence" value="ECO:0007669"/>
    <property type="project" value="InterPro"/>
</dbReference>
<dbReference type="GO" id="GO:0004129">
    <property type="term" value="F:cytochrome-c oxidase activity"/>
    <property type="evidence" value="ECO:0007669"/>
    <property type="project" value="UniProtKB-EC"/>
</dbReference>
<dbReference type="GO" id="GO:0042773">
    <property type="term" value="P:ATP synthesis coupled electron transport"/>
    <property type="evidence" value="ECO:0007669"/>
    <property type="project" value="TreeGrafter"/>
</dbReference>
<dbReference type="Gene3D" id="1.10.287.90">
    <property type="match status" value="1"/>
</dbReference>
<dbReference type="Gene3D" id="2.60.40.420">
    <property type="entry name" value="Cupredoxins - blue copper proteins"/>
    <property type="match status" value="1"/>
</dbReference>
<dbReference type="InterPro" id="IPR045187">
    <property type="entry name" value="CcO_II"/>
</dbReference>
<dbReference type="InterPro" id="IPR002429">
    <property type="entry name" value="CcO_II-like_C"/>
</dbReference>
<dbReference type="InterPro" id="IPR001505">
    <property type="entry name" value="Copper_CuA"/>
</dbReference>
<dbReference type="InterPro" id="IPR008972">
    <property type="entry name" value="Cupredoxin"/>
</dbReference>
<dbReference type="InterPro" id="IPR036257">
    <property type="entry name" value="Cyt_c_oxidase_su2_TM_sf"/>
</dbReference>
<dbReference type="PANTHER" id="PTHR22888:SF9">
    <property type="entry name" value="CYTOCHROME C OXIDASE SUBUNIT 2"/>
    <property type="match status" value="1"/>
</dbReference>
<dbReference type="PANTHER" id="PTHR22888">
    <property type="entry name" value="CYTOCHROME C OXIDASE, SUBUNIT II"/>
    <property type="match status" value="1"/>
</dbReference>
<dbReference type="Pfam" id="PF00116">
    <property type="entry name" value="COX2"/>
    <property type="match status" value="1"/>
</dbReference>
<dbReference type="SUPFAM" id="SSF49503">
    <property type="entry name" value="Cupredoxins"/>
    <property type="match status" value="1"/>
</dbReference>
<dbReference type="SUPFAM" id="SSF81464">
    <property type="entry name" value="Cytochrome c oxidase subunit II-like, transmembrane region"/>
    <property type="match status" value="1"/>
</dbReference>
<dbReference type="PROSITE" id="PS00078">
    <property type="entry name" value="COX2"/>
    <property type="match status" value="1"/>
</dbReference>
<dbReference type="PROSITE" id="PS50857">
    <property type="entry name" value="COX2_CUA"/>
    <property type="match status" value="1"/>
</dbReference>
<sequence length="353" mass="39521">MTARELVCSQRVGQGLSRRLRPLVLAVTLGVLVVTLSGCSWSDALAIGWPEGITPEAHLNRQLWIGAVVASLVVGVIVWGLIFWSTIFHRKKTTDTELPRQFGYNMPLELVLTVTPFLIISMLFYFTVIVQDKMLYLAKDPEVVIDVTAFQWNWKFGYQRVDFKDGTLTYDGVDPARKKAMVSKPEGKDSHGEELVGAVRGLNTEDRAYLNFDKVETLGTTTEIPVLVLPAGKRIEFQLNSADVVHSFWVPKFLFKRDVMPNPVANNSVNVFQVEEITKTGAFVGHCAEMCGTYHSMMNFEVRVVAPNDFKAYLQQRIDGKTNAEALQVIAQPPLAVTTHPFDTRRGQLTNSQ</sequence>
<protein>
    <recommendedName>
        <fullName>Probable cytochrome c oxidase subunit 2</fullName>
        <ecNumber>7.1.1.9</ecNumber>
    </recommendedName>
    <alternativeName>
        <fullName>Cytochrome aa3 subunit 2</fullName>
    </alternativeName>
    <alternativeName>
        <fullName>Cytochrome c oxidase polypeptide II</fullName>
    </alternativeName>
</protein>
<feature type="signal peptide" evidence="2">
    <location>
        <begin position="1"/>
        <end position="42"/>
    </location>
</feature>
<feature type="chain" id="PRO_0000006056" description="Probable cytochrome c oxidase subunit 2">
    <location>
        <begin position="43"/>
        <end position="353"/>
    </location>
</feature>
<feature type="transmembrane region" description="Helical" evidence="2">
    <location>
        <begin position="63"/>
        <end position="83"/>
    </location>
</feature>
<feature type="transmembrane region" description="Helical" evidence="2">
    <location>
        <begin position="110"/>
        <end position="130"/>
    </location>
</feature>
<feature type="binding site" evidence="2">
    <location>
        <position position="246"/>
    </location>
    <ligand>
        <name>Cu cation</name>
        <dbReference type="ChEBI" id="CHEBI:23378"/>
        <label>A</label>
    </ligand>
</feature>
<feature type="binding site" evidence="2">
    <location>
        <position position="287"/>
    </location>
    <ligand>
        <name>Cu cation</name>
        <dbReference type="ChEBI" id="CHEBI:23378"/>
        <label>A</label>
    </ligand>
</feature>
<feature type="binding site" evidence="2">
    <location>
        <position position="291"/>
    </location>
    <ligand>
        <name>Cu cation</name>
        <dbReference type="ChEBI" id="CHEBI:23378"/>
        <label>A</label>
    </ligand>
</feature>
<feature type="binding site" evidence="2">
    <location>
        <position position="295"/>
    </location>
    <ligand>
        <name>Cu cation</name>
        <dbReference type="ChEBI" id="CHEBI:23378"/>
        <label>A</label>
    </ligand>
</feature>
<keyword id="KW-1003">Cell membrane</keyword>
<keyword id="KW-0186">Copper</keyword>
<keyword id="KW-0249">Electron transport</keyword>
<keyword id="KW-0472">Membrane</keyword>
<keyword id="KW-0479">Metal-binding</keyword>
<keyword id="KW-1185">Reference proteome</keyword>
<keyword id="KW-0679">Respiratory chain</keyword>
<keyword id="KW-0732">Signal</keyword>
<keyword id="KW-1278">Translocase</keyword>
<keyword id="KW-0812">Transmembrane</keyword>
<keyword id="KW-1133">Transmembrane helix</keyword>
<keyword id="KW-0813">Transport</keyword>